<evidence type="ECO:0000255" key="1">
    <source>
        <dbReference type="HAMAP-Rule" id="MF_01629"/>
    </source>
</evidence>
<organism>
    <name type="scientific">Rhodopseudomonas palustris (strain BisB18)</name>
    <dbReference type="NCBI Taxonomy" id="316056"/>
    <lineage>
        <taxon>Bacteria</taxon>
        <taxon>Pseudomonadati</taxon>
        <taxon>Pseudomonadota</taxon>
        <taxon>Alphaproteobacteria</taxon>
        <taxon>Hyphomicrobiales</taxon>
        <taxon>Nitrobacteraceae</taxon>
        <taxon>Rhodopseudomonas</taxon>
    </lineage>
</organism>
<reference key="1">
    <citation type="submission" date="2006-03" db="EMBL/GenBank/DDBJ databases">
        <title>Complete sequence of Rhodopseudomonas palustris BisB18.</title>
        <authorList>
            <consortium name="US DOE Joint Genome Institute"/>
            <person name="Copeland A."/>
            <person name="Lucas S."/>
            <person name="Lapidus A."/>
            <person name="Barry K."/>
            <person name="Detter J.C."/>
            <person name="Glavina del Rio T."/>
            <person name="Hammon N."/>
            <person name="Israni S."/>
            <person name="Dalin E."/>
            <person name="Tice H."/>
            <person name="Pitluck S."/>
            <person name="Chain P."/>
            <person name="Malfatti S."/>
            <person name="Shin M."/>
            <person name="Vergez L."/>
            <person name="Schmutz J."/>
            <person name="Larimer F."/>
            <person name="Land M."/>
            <person name="Hauser L."/>
            <person name="Pelletier D.A."/>
            <person name="Kyrpides N."/>
            <person name="Anderson I."/>
            <person name="Oda Y."/>
            <person name="Harwood C.S."/>
            <person name="Richardson P."/>
        </authorList>
    </citation>
    <scope>NUCLEOTIDE SEQUENCE [LARGE SCALE GENOMIC DNA]</scope>
    <source>
        <strain>BisB18</strain>
    </source>
</reference>
<name>PDXH_RHOPB</name>
<accession>Q21A86</accession>
<feature type="chain" id="PRO_0000255884" description="Pyridoxine/pyridoxamine 5'-phosphate oxidase">
    <location>
        <begin position="1"/>
        <end position="213"/>
    </location>
</feature>
<feature type="binding site" evidence="1">
    <location>
        <begin position="60"/>
        <end position="65"/>
    </location>
    <ligand>
        <name>FMN</name>
        <dbReference type="ChEBI" id="CHEBI:58210"/>
    </ligand>
</feature>
<feature type="binding site" evidence="1">
    <location>
        <position position="65"/>
    </location>
    <ligand>
        <name>substrate</name>
    </ligand>
</feature>
<feature type="binding site" evidence="1">
    <location>
        <begin position="75"/>
        <end position="76"/>
    </location>
    <ligand>
        <name>FMN</name>
        <dbReference type="ChEBI" id="CHEBI:58210"/>
    </ligand>
</feature>
<feature type="binding site" evidence="1">
    <location>
        <position position="82"/>
    </location>
    <ligand>
        <name>FMN</name>
        <dbReference type="ChEBI" id="CHEBI:58210"/>
    </ligand>
</feature>
<feature type="binding site" evidence="1">
    <location>
        <position position="104"/>
    </location>
    <ligand>
        <name>FMN</name>
        <dbReference type="ChEBI" id="CHEBI:58210"/>
    </ligand>
</feature>
<feature type="binding site" evidence="1">
    <location>
        <position position="122"/>
    </location>
    <ligand>
        <name>substrate</name>
    </ligand>
</feature>
<feature type="binding site" evidence="1">
    <location>
        <position position="126"/>
    </location>
    <ligand>
        <name>substrate</name>
    </ligand>
</feature>
<feature type="binding site" evidence="1">
    <location>
        <position position="130"/>
    </location>
    <ligand>
        <name>substrate</name>
    </ligand>
</feature>
<feature type="binding site" evidence="1">
    <location>
        <begin position="139"/>
        <end position="140"/>
    </location>
    <ligand>
        <name>FMN</name>
        <dbReference type="ChEBI" id="CHEBI:58210"/>
    </ligand>
</feature>
<feature type="binding site" evidence="1">
    <location>
        <position position="184"/>
    </location>
    <ligand>
        <name>FMN</name>
        <dbReference type="ChEBI" id="CHEBI:58210"/>
    </ligand>
</feature>
<feature type="binding site" evidence="1">
    <location>
        <begin position="190"/>
        <end position="192"/>
    </location>
    <ligand>
        <name>substrate</name>
    </ligand>
</feature>
<feature type="binding site" evidence="1">
    <location>
        <position position="194"/>
    </location>
    <ligand>
        <name>FMN</name>
        <dbReference type="ChEBI" id="CHEBI:58210"/>
    </ligand>
</feature>
<dbReference type="EC" id="1.4.3.5" evidence="1"/>
<dbReference type="EMBL" id="CP000301">
    <property type="protein sequence ID" value="ABD86700.1"/>
    <property type="molecule type" value="Genomic_DNA"/>
</dbReference>
<dbReference type="SMR" id="Q21A86"/>
<dbReference type="STRING" id="316056.RPC_1136"/>
<dbReference type="KEGG" id="rpc:RPC_1136"/>
<dbReference type="eggNOG" id="COG0259">
    <property type="taxonomic scope" value="Bacteria"/>
</dbReference>
<dbReference type="HOGENOM" id="CLU_032263_2_2_5"/>
<dbReference type="OrthoDB" id="9780392at2"/>
<dbReference type="UniPathway" id="UPA01068">
    <property type="reaction ID" value="UER00304"/>
</dbReference>
<dbReference type="UniPathway" id="UPA01068">
    <property type="reaction ID" value="UER00305"/>
</dbReference>
<dbReference type="GO" id="GO:0010181">
    <property type="term" value="F:FMN binding"/>
    <property type="evidence" value="ECO:0007669"/>
    <property type="project" value="UniProtKB-UniRule"/>
</dbReference>
<dbReference type="GO" id="GO:0004733">
    <property type="term" value="F:pyridoxamine phosphate oxidase activity"/>
    <property type="evidence" value="ECO:0007669"/>
    <property type="project" value="UniProtKB-UniRule"/>
</dbReference>
<dbReference type="GO" id="GO:0008615">
    <property type="term" value="P:pyridoxine biosynthetic process"/>
    <property type="evidence" value="ECO:0007669"/>
    <property type="project" value="UniProtKB-KW"/>
</dbReference>
<dbReference type="FunFam" id="2.30.110.10:FF:000012">
    <property type="entry name" value="Predicted protein"/>
    <property type="match status" value="1"/>
</dbReference>
<dbReference type="Gene3D" id="2.30.110.10">
    <property type="entry name" value="Electron Transport, Fmn-binding Protein, Chain A"/>
    <property type="match status" value="1"/>
</dbReference>
<dbReference type="HAMAP" id="MF_01629">
    <property type="entry name" value="PdxH"/>
    <property type="match status" value="1"/>
</dbReference>
<dbReference type="InterPro" id="IPR000659">
    <property type="entry name" value="Pyridox_Oxase"/>
</dbReference>
<dbReference type="InterPro" id="IPR019740">
    <property type="entry name" value="Pyridox_Oxase_CS"/>
</dbReference>
<dbReference type="InterPro" id="IPR011576">
    <property type="entry name" value="Pyridox_Oxase_N"/>
</dbReference>
<dbReference type="InterPro" id="IPR019576">
    <property type="entry name" value="Pyridoxamine_oxidase_dimer_C"/>
</dbReference>
<dbReference type="InterPro" id="IPR012349">
    <property type="entry name" value="Split_barrel_FMN-bd"/>
</dbReference>
<dbReference type="NCBIfam" id="TIGR00558">
    <property type="entry name" value="pdxH"/>
    <property type="match status" value="1"/>
</dbReference>
<dbReference type="NCBIfam" id="NF004231">
    <property type="entry name" value="PRK05679.1"/>
    <property type="match status" value="1"/>
</dbReference>
<dbReference type="PANTHER" id="PTHR10851:SF0">
    <property type="entry name" value="PYRIDOXINE-5'-PHOSPHATE OXIDASE"/>
    <property type="match status" value="1"/>
</dbReference>
<dbReference type="PANTHER" id="PTHR10851">
    <property type="entry name" value="PYRIDOXINE-5-PHOSPHATE OXIDASE"/>
    <property type="match status" value="1"/>
</dbReference>
<dbReference type="Pfam" id="PF10590">
    <property type="entry name" value="PNP_phzG_C"/>
    <property type="match status" value="1"/>
</dbReference>
<dbReference type="Pfam" id="PF01243">
    <property type="entry name" value="PNPOx_N"/>
    <property type="match status" value="1"/>
</dbReference>
<dbReference type="PIRSF" id="PIRSF000190">
    <property type="entry name" value="Pyd_amn-ph_oxd"/>
    <property type="match status" value="1"/>
</dbReference>
<dbReference type="SUPFAM" id="SSF50475">
    <property type="entry name" value="FMN-binding split barrel"/>
    <property type="match status" value="1"/>
</dbReference>
<dbReference type="PROSITE" id="PS01064">
    <property type="entry name" value="PYRIDOX_OXIDASE"/>
    <property type="match status" value="1"/>
</dbReference>
<protein>
    <recommendedName>
        <fullName evidence="1">Pyridoxine/pyridoxamine 5'-phosphate oxidase</fullName>
        <ecNumber evidence="1">1.4.3.5</ecNumber>
    </recommendedName>
    <alternativeName>
        <fullName evidence="1">PNP/PMP oxidase</fullName>
        <shortName evidence="1">PNPOx</shortName>
    </alternativeName>
    <alternativeName>
        <fullName evidence="1">Pyridoxal 5'-phosphate synthase</fullName>
    </alternativeName>
</protein>
<sequence length="213" mass="23807">MSDATSIKHPSGLTSGDFTAAEEPFALFAEWFAEASGSEPNDPNAMALATVDPDGLPDVRMVLMKGYDSHGFVFYSHIASQKGRELAANPKAALLFHWKSLRRQVRVRGAVTPVSDAEADAYFATRSKQSQIGAWASKQSQPLESRFAFEQAIAGVAAKHLIGAVPRPPGWSGWRVTPARFEFWHDRPFRLHDRIEFRRDTPDHPWTKTRLYP</sequence>
<keyword id="KW-0285">Flavoprotein</keyword>
<keyword id="KW-0288">FMN</keyword>
<keyword id="KW-0560">Oxidoreductase</keyword>
<keyword id="KW-0664">Pyridoxine biosynthesis</keyword>
<gene>
    <name evidence="1" type="primary">pdxH</name>
    <name type="ordered locus">RPC_1136</name>
</gene>
<comment type="function">
    <text evidence="1">Catalyzes the oxidation of either pyridoxine 5'-phosphate (PNP) or pyridoxamine 5'-phosphate (PMP) into pyridoxal 5'-phosphate (PLP).</text>
</comment>
<comment type="catalytic activity">
    <reaction evidence="1">
        <text>pyridoxamine 5'-phosphate + O2 + H2O = pyridoxal 5'-phosphate + H2O2 + NH4(+)</text>
        <dbReference type="Rhea" id="RHEA:15817"/>
        <dbReference type="ChEBI" id="CHEBI:15377"/>
        <dbReference type="ChEBI" id="CHEBI:15379"/>
        <dbReference type="ChEBI" id="CHEBI:16240"/>
        <dbReference type="ChEBI" id="CHEBI:28938"/>
        <dbReference type="ChEBI" id="CHEBI:58451"/>
        <dbReference type="ChEBI" id="CHEBI:597326"/>
        <dbReference type="EC" id="1.4.3.5"/>
    </reaction>
</comment>
<comment type="catalytic activity">
    <reaction evidence="1">
        <text>pyridoxine 5'-phosphate + O2 = pyridoxal 5'-phosphate + H2O2</text>
        <dbReference type="Rhea" id="RHEA:15149"/>
        <dbReference type="ChEBI" id="CHEBI:15379"/>
        <dbReference type="ChEBI" id="CHEBI:16240"/>
        <dbReference type="ChEBI" id="CHEBI:58589"/>
        <dbReference type="ChEBI" id="CHEBI:597326"/>
        <dbReference type="EC" id="1.4.3.5"/>
    </reaction>
</comment>
<comment type="cofactor">
    <cofactor evidence="1">
        <name>FMN</name>
        <dbReference type="ChEBI" id="CHEBI:58210"/>
    </cofactor>
    <text evidence="1">Binds 1 FMN per subunit.</text>
</comment>
<comment type="pathway">
    <text evidence="1">Cofactor metabolism; pyridoxal 5'-phosphate salvage; pyridoxal 5'-phosphate from pyridoxamine 5'-phosphate: step 1/1.</text>
</comment>
<comment type="pathway">
    <text evidence="1">Cofactor metabolism; pyridoxal 5'-phosphate salvage; pyridoxal 5'-phosphate from pyridoxine 5'-phosphate: step 1/1.</text>
</comment>
<comment type="subunit">
    <text evidence="1">Homodimer.</text>
</comment>
<comment type="similarity">
    <text evidence="1">Belongs to the pyridoxamine 5'-phosphate oxidase family.</text>
</comment>
<proteinExistence type="inferred from homology"/>